<feature type="chain" id="PRO_0000276384" description="Large ribosomal subunit protein uL16c">
    <location>
        <begin position="1"/>
        <end position="135"/>
    </location>
</feature>
<comment type="subunit">
    <text evidence="1">Part of the 50S ribosomal subunit.</text>
</comment>
<comment type="subcellular location">
    <subcellularLocation>
        <location>Plastid</location>
        <location>Chloroplast</location>
    </subcellularLocation>
</comment>
<comment type="similarity">
    <text evidence="1">Belongs to the universal ribosomal protein uL16 family.</text>
</comment>
<name>RK16_JASNU</name>
<reference key="1">
    <citation type="journal article" date="2007" name="Mol. Biol. Evol.">
        <title>Gene relocations within chloroplast genomes of Jasminum and Menodora (Oleaceae) are due to multiple, overlapping inversions.</title>
        <authorList>
            <person name="Lee H.-L."/>
            <person name="Jansen R.K."/>
            <person name="Chumley T.W."/>
            <person name="Kim K.-J."/>
        </authorList>
    </citation>
    <scope>NUCLEOTIDE SEQUENCE [LARGE SCALE GENOMIC DNA]</scope>
</reference>
<sequence length="135" mass="15249">MLSPKKTRFRKQHRGRMKGISSRGNYICFGRYALQALEPAWITSRQIEAGRRAMTRNVRRGGKIWVRIFPDKPVTARSTEARMGAGKGDPKYWVAVVKPGRILYEMGGVTKNIARRAISIAASKMPIRTQFIISG</sequence>
<keyword id="KW-0150">Chloroplast</keyword>
<keyword id="KW-0934">Plastid</keyword>
<keyword id="KW-0687">Ribonucleoprotein</keyword>
<keyword id="KW-0689">Ribosomal protein</keyword>
<accession>Q06R94</accession>
<proteinExistence type="inferred from homology"/>
<protein>
    <recommendedName>
        <fullName evidence="1">Large ribosomal subunit protein uL16c</fullName>
    </recommendedName>
    <alternativeName>
        <fullName evidence="2">50S ribosomal protein L16, chloroplastic</fullName>
    </alternativeName>
</protein>
<geneLocation type="chloroplast"/>
<organism>
    <name type="scientific">Jasminum nudiflorum</name>
    <name type="common">Winter jasmine</name>
    <dbReference type="NCBI Taxonomy" id="126431"/>
    <lineage>
        <taxon>Eukaryota</taxon>
        <taxon>Viridiplantae</taxon>
        <taxon>Streptophyta</taxon>
        <taxon>Embryophyta</taxon>
        <taxon>Tracheophyta</taxon>
        <taxon>Spermatophyta</taxon>
        <taxon>Magnoliopsida</taxon>
        <taxon>eudicotyledons</taxon>
        <taxon>Gunneridae</taxon>
        <taxon>Pentapetalae</taxon>
        <taxon>asterids</taxon>
        <taxon>lamiids</taxon>
        <taxon>Lamiales</taxon>
        <taxon>Oleaceae</taxon>
        <taxon>Jasmineae</taxon>
        <taxon>Jasminum</taxon>
    </lineage>
</organism>
<dbReference type="EMBL" id="DQ673255">
    <property type="protein sequence ID" value="ABG74664.1"/>
    <property type="molecule type" value="Genomic_DNA"/>
</dbReference>
<dbReference type="RefSeq" id="YP_778527.1">
    <property type="nucleotide sequence ID" value="NC_008407.1"/>
</dbReference>
<dbReference type="SMR" id="Q06R94"/>
<dbReference type="GeneID" id="4319792"/>
<dbReference type="GO" id="GO:0009507">
    <property type="term" value="C:chloroplast"/>
    <property type="evidence" value="ECO:0007669"/>
    <property type="project" value="UniProtKB-SubCell"/>
</dbReference>
<dbReference type="GO" id="GO:0005762">
    <property type="term" value="C:mitochondrial large ribosomal subunit"/>
    <property type="evidence" value="ECO:0007669"/>
    <property type="project" value="TreeGrafter"/>
</dbReference>
<dbReference type="GO" id="GO:0019843">
    <property type="term" value="F:rRNA binding"/>
    <property type="evidence" value="ECO:0007669"/>
    <property type="project" value="InterPro"/>
</dbReference>
<dbReference type="GO" id="GO:0003735">
    <property type="term" value="F:structural constituent of ribosome"/>
    <property type="evidence" value="ECO:0007669"/>
    <property type="project" value="InterPro"/>
</dbReference>
<dbReference type="GO" id="GO:0032543">
    <property type="term" value="P:mitochondrial translation"/>
    <property type="evidence" value="ECO:0007669"/>
    <property type="project" value="TreeGrafter"/>
</dbReference>
<dbReference type="CDD" id="cd01433">
    <property type="entry name" value="Ribosomal_L16_L10e"/>
    <property type="match status" value="1"/>
</dbReference>
<dbReference type="FunFam" id="3.90.1170.10:FF:000001">
    <property type="entry name" value="50S ribosomal protein L16"/>
    <property type="match status" value="1"/>
</dbReference>
<dbReference type="Gene3D" id="3.90.1170.10">
    <property type="entry name" value="Ribosomal protein L10e/L16"/>
    <property type="match status" value="1"/>
</dbReference>
<dbReference type="HAMAP" id="MF_01342">
    <property type="entry name" value="Ribosomal_uL16"/>
    <property type="match status" value="1"/>
</dbReference>
<dbReference type="InterPro" id="IPR047873">
    <property type="entry name" value="Ribosomal_uL16"/>
</dbReference>
<dbReference type="InterPro" id="IPR000114">
    <property type="entry name" value="Ribosomal_uL16_bact-type"/>
</dbReference>
<dbReference type="InterPro" id="IPR020798">
    <property type="entry name" value="Ribosomal_uL16_CS"/>
</dbReference>
<dbReference type="InterPro" id="IPR016180">
    <property type="entry name" value="Ribosomal_uL16_dom"/>
</dbReference>
<dbReference type="InterPro" id="IPR036920">
    <property type="entry name" value="Ribosomal_uL16_sf"/>
</dbReference>
<dbReference type="NCBIfam" id="TIGR01164">
    <property type="entry name" value="rplP_bact"/>
    <property type="match status" value="1"/>
</dbReference>
<dbReference type="PANTHER" id="PTHR12220">
    <property type="entry name" value="50S/60S RIBOSOMAL PROTEIN L16"/>
    <property type="match status" value="1"/>
</dbReference>
<dbReference type="PANTHER" id="PTHR12220:SF13">
    <property type="entry name" value="LARGE RIBOSOMAL SUBUNIT PROTEIN UL16M"/>
    <property type="match status" value="1"/>
</dbReference>
<dbReference type="Pfam" id="PF00252">
    <property type="entry name" value="Ribosomal_L16"/>
    <property type="match status" value="1"/>
</dbReference>
<dbReference type="PRINTS" id="PR00060">
    <property type="entry name" value="RIBOSOMALL16"/>
</dbReference>
<dbReference type="SUPFAM" id="SSF54686">
    <property type="entry name" value="Ribosomal protein L16p/L10e"/>
    <property type="match status" value="1"/>
</dbReference>
<dbReference type="PROSITE" id="PS00586">
    <property type="entry name" value="RIBOSOMAL_L16_1"/>
    <property type="match status" value="1"/>
</dbReference>
<dbReference type="PROSITE" id="PS00701">
    <property type="entry name" value="RIBOSOMAL_L16_2"/>
    <property type="match status" value="1"/>
</dbReference>
<gene>
    <name evidence="1" type="primary">rpl16</name>
    <name type="ORF">JNC0897</name>
</gene>
<evidence type="ECO:0000255" key="1">
    <source>
        <dbReference type="HAMAP-Rule" id="MF_01342"/>
    </source>
</evidence>
<evidence type="ECO:0000305" key="2"/>